<organism>
    <name type="scientific">Saccharomyces cerevisiae (strain ATCC 204508 / S288c)</name>
    <name type="common">Baker's yeast</name>
    <dbReference type="NCBI Taxonomy" id="559292"/>
    <lineage>
        <taxon>Eukaryota</taxon>
        <taxon>Fungi</taxon>
        <taxon>Dikarya</taxon>
        <taxon>Ascomycota</taxon>
        <taxon>Saccharomycotina</taxon>
        <taxon>Saccharomycetes</taxon>
        <taxon>Saccharomycetales</taxon>
        <taxon>Saccharomycetaceae</taxon>
        <taxon>Saccharomyces</taxon>
    </lineage>
</organism>
<reference key="1">
    <citation type="journal article" date="1994" name="J. Biol. Chem.">
        <title>Cloning and disruption of CKB2, the gene encoding the 32-kDa regulatory beta'-subunit of Saccharomyces cerevisiae casein kinase II.</title>
        <authorList>
            <person name="Reed J.C."/>
            <person name="Bidwai A.P."/>
            <person name="Glover C.V.C."/>
        </authorList>
    </citation>
    <scope>NUCLEOTIDE SEQUENCE [GENOMIC DNA]</scope>
</reference>
<reference key="2">
    <citation type="journal article" date="1997" name="Nature">
        <title>The nucleotide sequence of Saccharomyces cerevisiae chromosome XV.</title>
        <authorList>
            <person name="Dujon B."/>
            <person name="Albermann K."/>
            <person name="Aldea M."/>
            <person name="Alexandraki D."/>
            <person name="Ansorge W."/>
            <person name="Arino J."/>
            <person name="Benes V."/>
            <person name="Bohn C."/>
            <person name="Bolotin-Fukuhara M."/>
            <person name="Bordonne R."/>
            <person name="Boyer J."/>
            <person name="Camasses A."/>
            <person name="Casamayor A."/>
            <person name="Casas C."/>
            <person name="Cheret G."/>
            <person name="Cziepluch C."/>
            <person name="Daignan-Fornier B."/>
            <person name="Dang V.-D."/>
            <person name="de Haan M."/>
            <person name="Delius H."/>
            <person name="Durand P."/>
            <person name="Fairhead C."/>
            <person name="Feldmann H."/>
            <person name="Gaillon L."/>
            <person name="Galisson F."/>
            <person name="Gamo F.-J."/>
            <person name="Gancedo C."/>
            <person name="Goffeau A."/>
            <person name="Goulding S.E."/>
            <person name="Grivell L.A."/>
            <person name="Habbig B."/>
            <person name="Hand N.J."/>
            <person name="Hani J."/>
            <person name="Hattenhorst U."/>
            <person name="Hebling U."/>
            <person name="Hernando Y."/>
            <person name="Herrero E."/>
            <person name="Heumann K."/>
            <person name="Hiesel R."/>
            <person name="Hilger F."/>
            <person name="Hofmann B."/>
            <person name="Hollenberg C.P."/>
            <person name="Hughes B."/>
            <person name="Jauniaux J.-C."/>
            <person name="Kalogeropoulos A."/>
            <person name="Katsoulou C."/>
            <person name="Kordes E."/>
            <person name="Lafuente M.J."/>
            <person name="Landt O."/>
            <person name="Louis E.J."/>
            <person name="Maarse A.C."/>
            <person name="Madania A."/>
            <person name="Mannhaupt G."/>
            <person name="Marck C."/>
            <person name="Martin R.P."/>
            <person name="Mewes H.-W."/>
            <person name="Michaux G."/>
            <person name="Paces V."/>
            <person name="Parle-McDermott A.G."/>
            <person name="Pearson B.M."/>
            <person name="Perrin A."/>
            <person name="Pettersson B."/>
            <person name="Poch O."/>
            <person name="Pohl T.M."/>
            <person name="Poirey R."/>
            <person name="Portetelle D."/>
            <person name="Pujol A."/>
            <person name="Purnelle B."/>
            <person name="Ramezani Rad M."/>
            <person name="Rechmann S."/>
            <person name="Schwager C."/>
            <person name="Schweizer M."/>
            <person name="Sor F."/>
            <person name="Sterky F."/>
            <person name="Tarassov I.A."/>
            <person name="Teodoru C."/>
            <person name="Tettelin H."/>
            <person name="Thierry A."/>
            <person name="Tobiasch E."/>
            <person name="Tzermia M."/>
            <person name="Uhlen M."/>
            <person name="Unseld M."/>
            <person name="Valens M."/>
            <person name="Vandenbol M."/>
            <person name="Vetter I."/>
            <person name="Vlcek C."/>
            <person name="Voet M."/>
            <person name="Volckaert G."/>
            <person name="Voss H."/>
            <person name="Wambutt R."/>
            <person name="Wedler H."/>
            <person name="Wiemann S."/>
            <person name="Winsor B."/>
            <person name="Wolfe K.H."/>
            <person name="Zollner A."/>
            <person name="Zumstein E."/>
            <person name="Kleine K."/>
        </authorList>
    </citation>
    <scope>NUCLEOTIDE SEQUENCE [LARGE SCALE GENOMIC DNA]</scope>
    <source>
        <strain>ATCC 204508 / S288c</strain>
    </source>
</reference>
<reference key="3">
    <citation type="journal article" date="2014" name="G3 (Bethesda)">
        <title>The reference genome sequence of Saccharomyces cerevisiae: Then and now.</title>
        <authorList>
            <person name="Engel S.R."/>
            <person name="Dietrich F.S."/>
            <person name="Fisk D.G."/>
            <person name="Binkley G."/>
            <person name="Balakrishnan R."/>
            <person name="Costanzo M.C."/>
            <person name="Dwight S.S."/>
            <person name="Hitz B.C."/>
            <person name="Karra K."/>
            <person name="Nash R.S."/>
            <person name="Weng S."/>
            <person name="Wong E.D."/>
            <person name="Lloyd P."/>
            <person name="Skrzypek M.S."/>
            <person name="Miyasato S.R."/>
            <person name="Simison M."/>
            <person name="Cherry J.M."/>
        </authorList>
    </citation>
    <scope>GENOME REANNOTATION</scope>
    <source>
        <strain>ATCC 204508 / S288c</strain>
    </source>
</reference>
<reference key="4">
    <citation type="journal article" date="2007" name="Genome Res.">
        <title>Approaching a complete repository of sequence-verified protein-encoding clones for Saccharomyces cerevisiae.</title>
        <authorList>
            <person name="Hu Y."/>
            <person name="Rolfs A."/>
            <person name="Bhullar B."/>
            <person name="Murthy T.V.S."/>
            <person name="Zhu C."/>
            <person name="Berger M.F."/>
            <person name="Camargo A.A."/>
            <person name="Kelley F."/>
            <person name="McCarron S."/>
            <person name="Jepson D."/>
            <person name="Richardson A."/>
            <person name="Raphael J."/>
            <person name="Moreira D."/>
            <person name="Taycher E."/>
            <person name="Zuo D."/>
            <person name="Mohr S."/>
            <person name="Kane M.F."/>
            <person name="Williamson J."/>
            <person name="Simpson A.J.G."/>
            <person name="Bulyk M.L."/>
            <person name="Harlow E."/>
            <person name="Marsischky G."/>
            <person name="Kolodner R.D."/>
            <person name="LaBaer J."/>
        </authorList>
    </citation>
    <scope>NUCLEOTIDE SEQUENCE [GENOMIC DNA]</scope>
    <source>
        <strain>ATCC 204508 / S288c</strain>
    </source>
</reference>
<reference key="5">
    <citation type="submission" date="1997-01" db="EMBL/GenBank/DDBJ databases">
        <authorList>
            <person name="Haider M."/>
            <person name="Bito A."/>
            <person name="Wallner J."/>
            <person name="Breitenbach M."/>
        </authorList>
    </citation>
    <scope>NUCLEOTIDE SEQUENCE [GENOMIC DNA] OF 172-258</scope>
    <source>
        <strain>AP3</strain>
    </source>
</reference>
<reference key="6">
    <citation type="journal article" date="1994" name="Arch. Biochem. Biophys.">
        <title>Casein kinase II of Saccharomyces cerevisiae contains two distinct regulatory subunits, beta and beta'.</title>
        <authorList>
            <person name="Bidwai A.P."/>
            <person name="Reed J.C."/>
            <person name="Glover C.V.C."/>
        </authorList>
    </citation>
    <scope>PARTIAL PROTEIN SEQUENCE</scope>
</reference>
<reference key="7">
    <citation type="journal article" date="2002" name="Mol. Cell. Biol.">
        <title>RNA polymerase II elongation factors of Saccharomyces cerevisiae: a targeted proteomics approach.</title>
        <authorList>
            <person name="Krogan N.J."/>
            <person name="Kim M."/>
            <person name="Ahn S.H."/>
            <person name="Zhong G."/>
            <person name="Kobor M.S."/>
            <person name="Cagney G."/>
            <person name="Emili A."/>
            <person name="Shilatifard A."/>
            <person name="Buratowski S."/>
            <person name="Greenblatt J.F."/>
        </authorList>
    </citation>
    <scope>INTERACTION WITH POB3 AND SPT16</scope>
</reference>
<reference key="8">
    <citation type="journal article" date="2003" name="Nature">
        <title>Global analysis of protein expression in yeast.</title>
        <authorList>
            <person name="Ghaemmaghami S."/>
            <person name="Huh W.-K."/>
            <person name="Bower K."/>
            <person name="Howson R.W."/>
            <person name="Belle A."/>
            <person name="Dephoure N."/>
            <person name="O'Shea E.K."/>
            <person name="Weissman J.S."/>
        </authorList>
    </citation>
    <scope>LEVEL OF PROTEIN EXPRESSION [LARGE SCALE ANALYSIS]</scope>
</reference>
<reference key="9">
    <citation type="journal article" date="2011" name="Genes Dev.">
        <title>Restriction of histone gene transcription to S phase by phosphorylation of a chromatin boundary protein.</title>
        <authorList>
            <person name="Kurat C.F."/>
            <person name="Lambert J.P."/>
            <person name="van Dyk D."/>
            <person name="Tsui K."/>
            <person name="van Bakel H."/>
            <person name="Kaluarachchi S."/>
            <person name="Friesen H."/>
            <person name="Kainth P."/>
            <person name="Nislow C."/>
            <person name="Figeys D."/>
            <person name="Fillingham J."/>
            <person name="Andrews B.J."/>
        </authorList>
    </citation>
    <scope>INTERACTION WITH YTA7</scope>
</reference>
<feature type="chain" id="PRO_0000068258" description="Casein kinase II subunit beta'">
    <location>
        <begin position="1"/>
        <end position="258"/>
    </location>
</feature>
<feature type="region of interest" description="Disordered" evidence="2">
    <location>
        <begin position="1"/>
        <end position="29"/>
    </location>
</feature>
<feature type="compositionally biased region" description="Polar residues" evidence="2">
    <location>
        <begin position="1"/>
        <end position="10"/>
    </location>
</feature>
<comment type="function">
    <text evidence="1">Regulatory subunit of casein kinase II/CK2 (By similarity). As part of the kinase complex regulates the basal catalytic activity of the alpha subunit a constitutively active serine/threonine-protein kinase that phosphorylates a large number of substrates containing acidic residues C-terminal to the phosphorylated serine or threonine (By similarity).</text>
</comment>
<comment type="subunit">
    <text evidence="3 5">Tetramer composed of an alpha subunit, an alpha' subunit, one beta subunit and one beta' subunit (PubMed:12242279). Interacts with FACT subunits POB3 and SPT16 (PubMed:12242279). Interaction with YTA7 (PubMed:22156209).</text>
</comment>
<comment type="interaction">
    <interactant intactId="EBI-9578">
        <id>P38930</id>
    </interactant>
    <interactant intactId="EBI-9533">
        <id>P15790</id>
        <label>CKA1</label>
    </interactant>
    <organismsDiffer>false</organismsDiffer>
    <experiments>10</experiments>
</comment>
<comment type="interaction">
    <interactant intactId="EBI-9578">
        <id>P38930</id>
    </interactant>
    <interactant intactId="EBI-9548">
        <id>P19454</id>
        <label>CKA2</label>
    </interactant>
    <organismsDiffer>false</organismsDiffer>
    <experiments>12</experiments>
</comment>
<comment type="interaction">
    <interactant intactId="EBI-9578">
        <id>P38930</id>
    </interactant>
    <interactant intactId="EBI-9563">
        <id>P43639</id>
        <label>CKB1</label>
    </interactant>
    <organismsDiffer>false</organismsDiffer>
    <experiments>7</experiments>
</comment>
<comment type="interaction">
    <interactant intactId="EBI-9578">
        <id>P38930</id>
    </interactant>
    <interactant intactId="EBI-6897">
        <id>P39521</id>
        <label>FHL1</label>
    </interactant>
    <organismsDiffer>false</organismsDiffer>
    <experiments>2</experiments>
</comment>
<comment type="PTM">
    <text evidence="1">Phosphorylated by alpha subunit.</text>
</comment>
<comment type="PTM">
    <text>The N-terminus is blocked.</text>
</comment>
<comment type="miscellaneous">
    <text evidence="4">Present with 7160 molecules/cell in log phase SD medium.</text>
</comment>
<comment type="similarity">
    <text evidence="7">Belongs to the casein kinase 2 subunit beta family.</text>
</comment>
<proteinExistence type="evidence at protein level"/>
<evidence type="ECO:0000250" key="1">
    <source>
        <dbReference type="UniProtKB" id="P67870"/>
    </source>
</evidence>
<evidence type="ECO:0000256" key="2">
    <source>
        <dbReference type="SAM" id="MobiDB-lite"/>
    </source>
</evidence>
<evidence type="ECO:0000269" key="3">
    <source>
    </source>
</evidence>
<evidence type="ECO:0000269" key="4">
    <source>
    </source>
</evidence>
<evidence type="ECO:0000269" key="5">
    <source>
    </source>
</evidence>
<evidence type="ECO:0000303" key="6">
    <source>
    </source>
</evidence>
<evidence type="ECO:0000305" key="7"/>
<name>CSK2C_YEAST</name>
<protein>
    <recommendedName>
        <fullName>Casein kinase II subunit beta'</fullName>
        <shortName>CK II beta'</shortName>
    </recommendedName>
</protein>
<dbReference type="EMBL" id="U08849">
    <property type="protein sequence ID" value="AAA21656.1"/>
    <property type="molecule type" value="Genomic_DNA"/>
</dbReference>
<dbReference type="EMBL" id="X87331">
    <property type="protein sequence ID" value="CAA60758.1"/>
    <property type="molecule type" value="Genomic_DNA"/>
</dbReference>
<dbReference type="EMBL" id="Z74947">
    <property type="protein sequence ID" value="CAA99229.1"/>
    <property type="molecule type" value="Genomic_DNA"/>
</dbReference>
<dbReference type="EMBL" id="AY692981">
    <property type="protein sequence ID" value="AAT93000.1"/>
    <property type="molecule type" value="Genomic_DNA"/>
</dbReference>
<dbReference type="EMBL" id="X82893">
    <property type="protein sequence ID" value="CAA58064.1"/>
    <property type="molecule type" value="Genomic_DNA"/>
</dbReference>
<dbReference type="EMBL" id="BK006948">
    <property type="protein sequence ID" value="DAA10822.1"/>
    <property type="molecule type" value="Genomic_DNA"/>
</dbReference>
<dbReference type="PIR" id="A54907">
    <property type="entry name" value="A54907"/>
</dbReference>
<dbReference type="RefSeq" id="NP_014682.1">
    <property type="nucleotide sequence ID" value="NM_001183458.1"/>
</dbReference>
<dbReference type="SMR" id="P38930"/>
<dbReference type="BioGRID" id="34441">
    <property type="interactions" value="524"/>
</dbReference>
<dbReference type="ComplexPortal" id="CPX-581">
    <property type="entry name" value="Casein kinase II complex, CKA1-CKA2 variant"/>
</dbReference>
<dbReference type="ComplexPortal" id="CPX-769">
    <property type="entry name" value="Casein kinase II complex, CKA1 variant"/>
</dbReference>
<dbReference type="ComplexPortal" id="CPX-770">
    <property type="entry name" value="Casein kinase II complex, CKA2 variant"/>
</dbReference>
<dbReference type="ComplexPortal" id="CPX-771">
    <property type="entry name" value="UTP-C complex variant 2"/>
</dbReference>
<dbReference type="ComplexPortal" id="CPX-772">
    <property type="entry name" value="UTP-C complex variant 1"/>
</dbReference>
<dbReference type="ComplexPortal" id="CPX-773">
    <property type="entry name" value="UTP-C complex variant 3"/>
</dbReference>
<dbReference type="ComplexPortal" id="CPX-774">
    <property type="entry name" value="CURI complex variant 1"/>
</dbReference>
<dbReference type="ComplexPortal" id="CPX-775">
    <property type="entry name" value="CURI complex variant 2"/>
</dbReference>
<dbReference type="ComplexPortal" id="CPX-776">
    <property type="entry name" value="CURI complex variant 3"/>
</dbReference>
<dbReference type="DIP" id="DIP-262N"/>
<dbReference type="FunCoup" id="P38930">
    <property type="interactions" value="1276"/>
</dbReference>
<dbReference type="IntAct" id="P38930">
    <property type="interactions" value="49"/>
</dbReference>
<dbReference type="MINT" id="P38930"/>
<dbReference type="STRING" id="4932.YOR039W"/>
<dbReference type="iPTMnet" id="P38930"/>
<dbReference type="PaxDb" id="4932-YOR039W"/>
<dbReference type="PeptideAtlas" id="P38930"/>
<dbReference type="EnsemblFungi" id="YOR039W_mRNA">
    <property type="protein sequence ID" value="YOR039W"/>
    <property type="gene ID" value="YOR039W"/>
</dbReference>
<dbReference type="GeneID" id="854204"/>
<dbReference type="KEGG" id="sce:YOR039W"/>
<dbReference type="AGR" id="SGD:S000005565"/>
<dbReference type="SGD" id="S000005565">
    <property type="gene designation" value="CKB2"/>
</dbReference>
<dbReference type="VEuPathDB" id="FungiDB:YOR039W"/>
<dbReference type="eggNOG" id="KOG3092">
    <property type="taxonomic scope" value="Eukaryota"/>
</dbReference>
<dbReference type="GeneTree" id="ENSGT00390000003781"/>
<dbReference type="HOGENOM" id="CLU_034027_3_2_1"/>
<dbReference type="InParanoid" id="P38930"/>
<dbReference type="OMA" id="DADFGRC"/>
<dbReference type="OrthoDB" id="3971593at2759"/>
<dbReference type="BioCyc" id="YEAST:G3O-33585-MONOMER"/>
<dbReference type="Reactome" id="R-SCE-2514853">
    <property type="pathway name" value="Condensation of Prometaphase Chromosomes"/>
</dbReference>
<dbReference type="Reactome" id="R-SCE-6798695">
    <property type="pathway name" value="Neutrophil degranulation"/>
</dbReference>
<dbReference type="Reactome" id="R-SCE-6804756">
    <property type="pathway name" value="Regulation of TP53 Activity through Phosphorylation"/>
</dbReference>
<dbReference type="Reactome" id="R-SCE-8934903">
    <property type="pathway name" value="Receptor Mediated Mitophagy"/>
</dbReference>
<dbReference type="Reactome" id="R-SCE-8948751">
    <property type="pathway name" value="Regulation of PTEN stability and activity"/>
</dbReference>
<dbReference type="BioGRID-ORCS" id="854204">
    <property type="hits" value="10 hits in 10 CRISPR screens"/>
</dbReference>
<dbReference type="PRO" id="PR:P38930"/>
<dbReference type="Proteomes" id="UP000002311">
    <property type="component" value="Chromosome XV"/>
</dbReference>
<dbReference type="RNAct" id="P38930">
    <property type="molecule type" value="protein"/>
</dbReference>
<dbReference type="GO" id="GO:0032545">
    <property type="term" value="C:CURI complex"/>
    <property type="evidence" value="ECO:0000314"/>
    <property type="project" value="SGD"/>
</dbReference>
<dbReference type="GO" id="GO:0005737">
    <property type="term" value="C:cytoplasm"/>
    <property type="evidence" value="ECO:0000318"/>
    <property type="project" value="GO_Central"/>
</dbReference>
<dbReference type="GO" id="GO:0005730">
    <property type="term" value="C:nucleolus"/>
    <property type="evidence" value="ECO:0000314"/>
    <property type="project" value="ComplexPortal"/>
</dbReference>
<dbReference type="GO" id="GO:0005654">
    <property type="term" value="C:nucleoplasm"/>
    <property type="evidence" value="ECO:0000304"/>
    <property type="project" value="Reactome"/>
</dbReference>
<dbReference type="GO" id="GO:0005956">
    <property type="term" value="C:protein kinase CK2 complex"/>
    <property type="evidence" value="ECO:0000314"/>
    <property type="project" value="SGD"/>
</dbReference>
<dbReference type="GO" id="GO:0032040">
    <property type="term" value="C:small-subunit processome"/>
    <property type="evidence" value="ECO:0000353"/>
    <property type="project" value="ComplexPortal"/>
</dbReference>
<dbReference type="GO" id="GO:0034456">
    <property type="term" value="C:UTP-C complex"/>
    <property type="evidence" value="ECO:0000314"/>
    <property type="project" value="SGD"/>
</dbReference>
<dbReference type="GO" id="GO:0019887">
    <property type="term" value="F:protein kinase regulator activity"/>
    <property type="evidence" value="ECO:0000315"/>
    <property type="project" value="SGD"/>
</dbReference>
<dbReference type="GO" id="GO:0030291">
    <property type="term" value="F:protein serine/threonine kinase inhibitor activity"/>
    <property type="evidence" value="ECO:0000314"/>
    <property type="project" value="SGD"/>
</dbReference>
<dbReference type="GO" id="GO:0006974">
    <property type="term" value="P:DNA damage response"/>
    <property type="evidence" value="ECO:0000314"/>
    <property type="project" value="SGD"/>
</dbReference>
<dbReference type="GO" id="GO:0030490">
    <property type="term" value="P:maturation of SSU-rRNA"/>
    <property type="evidence" value="ECO:0000303"/>
    <property type="project" value="ComplexPortal"/>
</dbReference>
<dbReference type="GO" id="GO:0042790">
    <property type="term" value="P:nucleolar large rRNA transcription by RNA polymerase I"/>
    <property type="evidence" value="ECO:0000314"/>
    <property type="project" value="ComplexPortal"/>
</dbReference>
<dbReference type="GO" id="GO:0051726">
    <property type="term" value="P:regulation of cell cycle"/>
    <property type="evidence" value="ECO:0000314"/>
    <property type="project" value="ComplexPortal"/>
</dbReference>
<dbReference type="GO" id="GO:0060962">
    <property type="term" value="P:regulation of ribosomal protein gene transcription by RNA polymerase II"/>
    <property type="evidence" value="ECO:0000314"/>
    <property type="project" value="ComplexPortal"/>
</dbReference>
<dbReference type="GO" id="GO:0006356">
    <property type="term" value="P:regulation of transcription by RNA polymerase I"/>
    <property type="evidence" value="ECO:0000314"/>
    <property type="project" value="SGD"/>
</dbReference>
<dbReference type="GO" id="GO:0006359">
    <property type="term" value="P:regulation of transcription by RNA polymerase III"/>
    <property type="evidence" value="ECO:0000314"/>
    <property type="project" value="SGD"/>
</dbReference>
<dbReference type="GO" id="GO:0000028">
    <property type="term" value="P:ribosomal small subunit assembly"/>
    <property type="evidence" value="ECO:0000303"/>
    <property type="project" value="ComplexPortal"/>
</dbReference>
<dbReference type="FunFam" id="1.10.1820.10:FF:000005">
    <property type="entry name" value="Casein kinase II subunit beta"/>
    <property type="match status" value="1"/>
</dbReference>
<dbReference type="FunFam" id="2.20.25.20:FF:000001">
    <property type="entry name" value="Casein kinase II subunit beta"/>
    <property type="match status" value="1"/>
</dbReference>
<dbReference type="Gene3D" id="2.20.25.20">
    <property type="match status" value="1"/>
</dbReference>
<dbReference type="Gene3D" id="1.10.1820.10">
    <property type="entry name" value="protein kinase ck2 holoenzyme, chain C, domain 1"/>
    <property type="match status" value="1"/>
</dbReference>
<dbReference type="InterPro" id="IPR016149">
    <property type="entry name" value="Casein_kin_II_reg-sub_N"/>
</dbReference>
<dbReference type="InterPro" id="IPR035991">
    <property type="entry name" value="Casein_kinase_II_beta-like"/>
</dbReference>
<dbReference type="InterPro" id="IPR000704">
    <property type="entry name" value="Casein_kinase_II_reg-sub"/>
</dbReference>
<dbReference type="PANTHER" id="PTHR11740">
    <property type="entry name" value="CASEIN KINASE II SUBUNIT BETA"/>
    <property type="match status" value="1"/>
</dbReference>
<dbReference type="PANTHER" id="PTHR11740:SF39">
    <property type="entry name" value="CASEIN KINASE II SUBUNIT BETA"/>
    <property type="match status" value="1"/>
</dbReference>
<dbReference type="Pfam" id="PF01214">
    <property type="entry name" value="CK_II_beta"/>
    <property type="match status" value="1"/>
</dbReference>
<dbReference type="PRINTS" id="PR00472">
    <property type="entry name" value="CASNKINASEII"/>
</dbReference>
<dbReference type="SMART" id="SM01085">
    <property type="entry name" value="CK_II_beta"/>
    <property type="match status" value="1"/>
</dbReference>
<dbReference type="SUPFAM" id="SSF57798">
    <property type="entry name" value="Casein kinase II beta subunit"/>
    <property type="match status" value="1"/>
</dbReference>
<dbReference type="PROSITE" id="PS01101">
    <property type="entry name" value="CK2_BETA"/>
    <property type="match status" value="1"/>
</dbReference>
<sequence length="258" mass="29842">MGSRSENVGTVTREGSRVEQDDVLMDDDSDSSEYVDMWIDLFLGRKGHEYFCDVDPEYITDRFNLMNLQKTVSKFSYVVQYIVDDLDDSILENMTHARLEQLESDSRKLYGLIHARYIITIKGLQKMYAKYKEADFGRCPRVYCNLQQLLPVGLHDIPGIDCVKLYCPSCEDLYIPKSSRHSSIDGAYFGTSFPGMFLQAFPDMVPKHPTKRYVPKIFGFELHKQAQLTRWQELQRLKLVEKLESKDVDLTKSGGFKT</sequence>
<accession>P38930</accession>
<accession>D6W2A6</accession>
<gene>
    <name evidence="6" type="primary">CKB2</name>
    <name type="ordered locus">YOR039W</name>
    <name type="ORF">OR26.32</name>
</gene>
<keyword id="KW-0903">Direct protein sequencing</keyword>
<keyword id="KW-0597">Phosphoprotein</keyword>
<keyword id="KW-1185">Reference proteome</keyword>